<protein>
    <recommendedName>
        <fullName evidence="1">tRNA pseudouridine synthase B</fullName>
        <ecNumber evidence="1">5.4.99.25</ecNumber>
    </recommendedName>
    <alternativeName>
        <fullName evidence="1">tRNA pseudouridine(55) synthase</fullName>
        <shortName evidence="1">Psi55 synthase</shortName>
    </alternativeName>
    <alternativeName>
        <fullName evidence="1">tRNA pseudouridylate synthase</fullName>
    </alternativeName>
    <alternativeName>
        <fullName evidence="1">tRNA-uridine isomerase</fullName>
    </alternativeName>
</protein>
<comment type="function">
    <text evidence="1">Responsible for synthesis of pseudouridine from uracil-55 in the psi GC loop of transfer RNAs.</text>
</comment>
<comment type="catalytic activity">
    <reaction evidence="1">
        <text>uridine(55) in tRNA = pseudouridine(55) in tRNA</text>
        <dbReference type="Rhea" id="RHEA:42532"/>
        <dbReference type="Rhea" id="RHEA-COMP:10101"/>
        <dbReference type="Rhea" id="RHEA-COMP:10102"/>
        <dbReference type="ChEBI" id="CHEBI:65314"/>
        <dbReference type="ChEBI" id="CHEBI:65315"/>
        <dbReference type="EC" id="5.4.99.25"/>
    </reaction>
</comment>
<comment type="similarity">
    <text evidence="1">Belongs to the pseudouridine synthase TruB family. Type 1 subfamily.</text>
</comment>
<dbReference type="EC" id="5.4.99.25" evidence="1"/>
<dbReference type="EMBL" id="AP008231">
    <property type="protein sequence ID" value="BAD78518.1"/>
    <property type="molecule type" value="Genomic_DNA"/>
</dbReference>
<dbReference type="RefSeq" id="WP_011242642.1">
    <property type="nucleotide sequence ID" value="NZ_CP085785.1"/>
</dbReference>
<dbReference type="SMR" id="Q5N5A0"/>
<dbReference type="GeneID" id="72430081"/>
<dbReference type="KEGG" id="syc:syc0328_c"/>
<dbReference type="eggNOG" id="COG0130">
    <property type="taxonomic scope" value="Bacteria"/>
</dbReference>
<dbReference type="Proteomes" id="UP000001175">
    <property type="component" value="Chromosome"/>
</dbReference>
<dbReference type="GO" id="GO:0003723">
    <property type="term" value="F:RNA binding"/>
    <property type="evidence" value="ECO:0007669"/>
    <property type="project" value="InterPro"/>
</dbReference>
<dbReference type="GO" id="GO:0160148">
    <property type="term" value="F:tRNA pseudouridine(55) synthase activity"/>
    <property type="evidence" value="ECO:0007669"/>
    <property type="project" value="UniProtKB-EC"/>
</dbReference>
<dbReference type="GO" id="GO:1990481">
    <property type="term" value="P:mRNA pseudouridine synthesis"/>
    <property type="evidence" value="ECO:0007669"/>
    <property type="project" value="TreeGrafter"/>
</dbReference>
<dbReference type="GO" id="GO:0031119">
    <property type="term" value="P:tRNA pseudouridine synthesis"/>
    <property type="evidence" value="ECO:0007669"/>
    <property type="project" value="UniProtKB-UniRule"/>
</dbReference>
<dbReference type="CDD" id="cd02573">
    <property type="entry name" value="PseudoU_synth_EcTruB"/>
    <property type="match status" value="1"/>
</dbReference>
<dbReference type="CDD" id="cd21152">
    <property type="entry name" value="PUA_TruB_bacterial"/>
    <property type="match status" value="1"/>
</dbReference>
<dbReference type="Gene3D" id="3.30.2350.10">
    <property type="entry name" value="Pseudouridine synthase"/>
    <property type="match status" value="1"/>
</dbReference>
<dbReference type="Gene3D" id="2.30.130.10">
    <property type="entry name" value="PUA domain"/>
    <property type="match status" value="1"/>
</dbReference>
<dbReference type="HAMAP" id="MF_01080">
    <property type="entry name" value="TruB_bact"/>
    <property type="match status" value="1"/>
</dbReference>
<dbReference type="InterPro" id="IPR020103">
    <property type="entry name" value="PsdUridine_synth_cat_dom_sf"/>
</dbReference>
<dbReference type="InterPro" id="IPR002501">
    <property type="entry name" value="PsdUridine_synth_N"/>
</dbReference>
<dbReference type="InterPro" id="IPR015947">
    <property type="entry name" value="PUA-like_sf"/>
</dbReference>
<dbReference type="InterPro" id="IPR036974">
    <property type="entry name" value="PUA_sf"/>
</dbReference>
<dbReference type="InterPro" id="IPR014780">
    <property type="entry name" value="tRNA_psdUridine_synth_TruB"/>
</dbReference>
<dbReference type="InterPro" id="IPR015240">
    <property type="entry name" value="tRNA_sdUridine_synth_fam1_C"/>
</dbReference>
<dbReference type="InterPro" id="IPR032819">
    <property type="entry name" value="TruB_C"/>
</dbReference>
<dbReference type="NCBIfam" id="TIGR00431">
    <property type="entry name" value="TruB"/>
    <property type="match status" value="1"/>
</dbReference>
<dbReference type="PANTHER" id="PTHR13767:SF2">
    <property type="entry name" value="PSEUDOURIDYLATE SYNTHASE TRUB1"/>
    <property type="match status" value="1"/>
</dbReference>
<dbReference type="PANTHER" id="PTHR13767">
    <property type="entry name" value="TRNA-PSEUDOURIDINE SYNTHASE"/>
    <property type="match status" value="1"/>
</dbReference>
<dbReference type="Pfam" id="PF09157">
    <property type="entry name" value="TruB-C_2"/>
    <property type="match status" value="1"/>
</dbReference>
<dbReference type="Pfam" id="PF16198">
    <property type="entry name" value="TruB_C_2"/>
    <property type="match status" value="1"/>
</dbReference>
<dbReference type="Pfam" id="PF01509">
    <property type="entry name" value="TruB_N"/>
    <property type="match status" value="1"/>
</dbReference>
<dbReference type="SUPFAM" id="SSF55120">
    <property type="entry name" value="Pseudouridine synthase"/>
    <property type="match status" value="1"/>
</dbReference>
<dbReference type="SUPFAM" id="SSF88697">
    <property type="entry name" value="PUA domain-like"/>
    <property type="match status" value="1"/>
</dbReference>
<proteinExistence type="inferred from homology"/>
<keyword id="KW-0413">Isomerase</keyword>
<keyword id="KW-0819">tRNA processing</keyword>
<reference key="1">
    <citation type="journal article" date="2007" name="Photosyn. Res.">
        <title>Complete nucleotide sequence of the freshwater unicellular cyanobacterium Synechococcus elongatus PCC 6301 chromosome: gene content and organization.</title>
        <authorList>
            <person name="Sugita C."/>
            <person name="Ogata K."/>
            <person name="Shikata M."/>
            <person name="Jikuya H."/>
            <person name="Takano J."/>
            <person name="Furumichi M."/>
            <person name="Kanehisa M."/>
            <person name="Omata T."/>
            <person name="Sugiura M."/>
            <person name="Sugita M."/>
        </authorList>
    </citation>
    <scope>NUCLEOTIDE SEQUENCE [LARGE SCALE GENOMIC DNA]</scope>
    <source>
        <strain>ATCC 27144 / PCC 6301 / SAUG 1402/1</strain>
    </source>
</reference>
<evidence type="ECO:0000255" key="1">
    <source>
        <dbReference type="HAMAP-Rule" id="MF_01080"/>
    </source>
</evidence>
<feature type="chain" id="PRO_0000121925" description="tRNA pseudouridine synthase B">
    <location>
        <begin position="1"/>
        <end position="294"/>
    </location>
</feature>
<feature type="active site" description="Nucleophile" evidence="1">
    <location>
        <position position="40"/>
    </location>
</feature>
<gene>
    <name evidence="1" type="primary">truB</name>
    <name type="ordered locus">syc0328_c</name>
</gene>
<name>TRUB_SYNP6</name>
<organism>
    <name type="scientific">Synechococcus sp. (strain ATCC 27144 / PCC 6301 / SAUG 1402/1)</name>
    <name type="common">Anacystis nidulans</name>
    <dbReference type="NCBI Taxonomy" id="269084"/>
    <lineage>
        <taxon>Bacteria</taxon>
        <taxon>Bacillati</taxon>
        <taxon>Cyanobacteriota</taxon>
        <taxon>Cyanophyceae</taxon>
        <taxon>Synechococcales</taxon>
        <taxon>Synechococcaceae</taxon>
        <taxon>Synechococcus</taxon>
    </lineage>
</organism>
<accession>Q5N5A0</accession>
<sequence length="294" mass="31539">MSSEGFVNLDKPAGWTSHDCVAKLRRLLRERRIGHGGTLDPAVTGVLPIAVGRATRLLPYLPSGKTYVGTIRFGLQTSTDDLTGDRLAEADTSHLSREAIEAALPQFLGHIQQQPPQVSAVQVQGQRLYQLARRGEAPTELPWRTVEIQSIRILQWRSGSQAELSVEIHCGAGTYIRSLARDLGAVLGVGGTLAELRRTASSGFDLNQSTPLTELLDGAAVPLLALDLPLQHLAKVQLSAETSDRWRQGQAMPVPDSVLPDAAPVRVYDLNGQFLGIGAIAAGLCKPKVVLAAL</sequence>